<dbReference type="EMBL" id="AY205130">
    <property type="protein sequence ID" value="AAP31004.1"/>
    <property type="molecule type" value="Genomic_DNA"/>
</dbReference>
<dbReference type="GlyCosmos" id="Q864G7">
    <property type="glycosylation" value="1 site, No reported glycans"/>
</dbReference>
<dbReference type="GO" id="GO:0005886">
    <property type="term" value="C:plasma membrane"/>
    <property type="evidence" value="ECO:0000250"/>
    <property type="project" value="UniProtKB"/>
</dbReference>
<dbReference type="GO" id="GO:0004980">
    <property type="term" value="F:melanocyte-stimulating hormone receptor activity"/>
    <property type="evidence" value="ECO:0007669"/>
    <property type="project" value="InterPro"/>
</dbReference>
<dbReference type="GO" id="GO:0007189">
    <property type="term" value="P:adenylate cyclase-activating G protein-coupled receptor signaling pathway"/>
    <property type="evidence" value="ECO:0007669"/>
    <property type="project" value="UniProtKB-ARBA"/>
</dbReference>
<dbReference type="FunFam" id="1.20.1070.10:FF:000211">
    <property type="entry name" value="Melanocyte-stimulating hormone receptor"/>
    <property type="match status" value="1"/>
</dbReference>
<dbReference type="Gene3D" id="1.20.1070.10">
    <property type="entry name" value="Rhodopsin 7-helix transmembrane proteins"/>
    <property type="match status" value="1"/>
</dbReference>
<dbReference type="InterPro" id="IPR000276">
    <property type="entry name" value="GPCR_Rhodpsn"/>
</dbReference>
<dbReference type="InterPro" id="IPR017452">
    <property type="entry name" value="GPCR_Rhodpsn_7TM"/>
</dbReference>
<dbReference type="InterPro" id="IPR001671">
    <property type="entry name" value="Melcrt_ACTH_rcpt"/>
</dbReference>
<dbReference type="InterPro" id="IPR000761">
    <property type="entry name" value="MSH_rcpt"/>
</dbReference>
<dbReference type="PANTHER" id="PTHR22750">
    <property type="entry name" value="G-PROTEIN COUPLED RECEPTOR"/>
    <property type="match status" value="1"/>
</dbReference>
<dbReference type="Pfam" id="PF00001">
    <property type="entry name" value="7tm_1"/>
    <property type="match status" value="1"/>
</dbReference>
<dbReference type="PRINTS" id="PR00237">
    <property type="entry name" value="GPCRRHODOPSN"/>
</dbReference>
<dbReference type="PRINTS" id="PR00534">
    <property type="entry name" value="MCRFAMILY"/>
</dbReference>
<dbReference type="PRINTS" id="PR00536">
    <property type="entry name" value="MELNOCYTESHR"/>
</dbReference>
<dbReference type="SMART" id="SM01381">
    <property type="entry name" value="7TM_GPCR_Srsx"/>
    <property type="match status" value="1"/>
</dbReference>
<dbReference type="SUPFAM" id="SSF81321">
    <property type="entry name" value="Family A G protein-coupled receptor-like"/>
    <property type="match status" value="1"/>
</dbReference>
<dbReference type="PROSITE" id="PS00237">
    <property type="entry name" value="G_PROTEIN_RECEP_F1_1"/>
    <property type="match status" value="1"/>
</dbReference>
<dbReference type="PROSITE" id="PS50262">
    <property type="entry name" value="G_PROTEIN_RECEP_F1_2"/>
    <property type="match status" value="1"/>
</dbReference>
<protein>
    <recommendedName>
        <fullName>Melanocyte-stimulating hormone receptor</fullName>
        <shortName>MSH-R</shortName>
    </recommendedName>
    <alternativeName>
        <fullName>Melanocortin receptor 1</fullName>
        <shortName>MC1-R</shortName>
    </alternativeName>
</protein>
<evidence type="ECO:0000250" key="1">
    <source>
        <dbReference type="UniProtKB" id="Q01726"/>
    </source>
</evidence>
<evidence type="ECO:0000255" key="2"/>
<evidence type="ECO:0000255" key="3">
    <source>
        <dbReference type="PROSITE-ProRule" id="PRU00521"/>
    </source>
</evidence>
<name>MSHR_ATEPA</name>
<organism>
    <name type="scientific">Ateles paniscus</name>
    <name type="common">Black spider monkey</name>
    <name type="synonym">Red-faced black spider monkey</name>
    <dbReference type="NCBI Taxonomy" id="9510"/>
    <lineage>
        <taxon>Eukaryota</taxon>
        <taxon>Metazoa</taxon>
        <taxon>Chordata</taxon>
        <taxon>Craniata</taxon>
        <taxon>Vertebrata</taxon>
        <taxon>Euteleostomi</taxon>
        <taxon>Mammalia</taxon>
        <taxon>Eutheria</taxon>
        <taxon>Euarchontoglires</taxon>
        <taxon>Primates</taxon>
        <taxon>Haplorrhini</taxon>
        <taxon>Platyrrhini</taxon>
        <taxon>Atelidae</taxon>
        <taxon>Atelinae</taxon>
        <taxon>Ateles</taxon>
    </lineage>
</organism>
<accession>Q864G7</accession>
<sequence length="317" mass="34721">MPMQGAQKRLLGSLNSTPTATPNLGLAANHTGAPCLEVSIPDGLFLSLGLVSLVENVLVVAAIAKNRNLHSPMYCFICCLALSDLLVSSSNMLETAVILLLEAGALATRASVVQQLQNTIDVLTCSSMLCSLCFLGAIAVDRHVSIFYALRYHSIMTLARARRAIAAIWVASVLSSTLFIAYCDHAXVLLCLVVFFLAMLVLMAVLYVHMLARACQHAQGITRLHQRQPPAHQGFGFRGAATLTILLGIFFLCWGPFFLHLTLVVLCPQHLTCSCIFKNFKVFLTLIICSTIIDPLIYAFRSQELRRTLKELLLCSW</sequence>
<proteinExistence type="inferred from homology"/>
<gene>
    <name type="primary">MC1R</name>
</gene>
<comment type="function">
    <text evidence="1">Receptor for MSH (alpha, beta and gamma) and ACTH. The activity of this receptor is mediated by G proteins which activate adenylate cyclase. Mediates melanogenesis, the production of eumelanin (black/brown) and phaeomelanin (red/yellow), via regulation of cAMP signaling in melanocytes.</text>
</comment>
<comment type="subunit">
    <text evidence="1">Interacts with MGRN1, but does not undergo MGRN1-mediated ubiquitination; this interaction competes with GNAS-binding and thus inhibits agonist-induced cAMP production. Interacts with OPN3; the interaction results in a decrease in MC1R-mediated cAMP signaling and ultimately a decrease in melanin production in melanocytes.</text>
</comment>
<comment type="subcellular location">
    <subcellularLocation>
        <location evidence="1">Cell membrane</location>
        <topology evidence="2">Multi-pass membrane protein</topology>
    </subcellularLocation>
</comment>
<comment type="similarity">
    <text evidence="3">Belongs to the G-protein coupled receptor 1 family.</text>
</comment>
<reference key="1">
    <citation type="journal article" date="2003" name="Am. J. Phys. Anthropol.">
        <title>Evolution of a pigmentation gene, the melanocortin-1 receptor, in primates.</title>
        <authorList>
            <person name="Mundy N.I."/>
            <person name="Kelly J."/>
        </authorList>
    </citation>
    <scope>NUCLEOTIDE SEQUENCE [GENOMIC DNA]</scope>
    <source>
        <strain>Isolate 3</strain>
    </source>
</reference>
<feature type="chain" id="PRO_0000069792" description="Melanocyte-stimulating hormone receptor">
    <location>
        <begin position="1"/>
        <end position="317"/>
    </location>
</feature>
<feature type="topological domain" description="Extracellular" evidence="2">
    <location>
        <begin position="1"/>
        <end position="37"/>
    </location>
</feature>
<feature type="transmembrane region" description="Helical; Name=1" evidence="2">
    <location>
        <begin position="38"/>
        <end position="63"/>
    </location>
</feature>
<feature type="topological domain" description="Cytoplasmic" evidence="2">
    <location>
        <begin position="64"/>
        <end position="72"/>
    </location>
</feature>
<feature type="transmembrane region" description="Helical; Name=2" evidence="2">
    <location>
        <begin position="73"/>
        <end position="93"/>
    </location>
</feature>
<feature type="topological domain" description="Extracellular" evidence="2">
    <location>
        <begin position="94"/>
        <end position="118"/>
    </location>
</feature>
<feature type="transmembrane region" description="Helical; Name=3" evidence="2">
    <location>
        <begin position="119"/>
        <end position="140"/>
    </location>
</feature>
<feature type="topological domain" description="Cytoplasmic" evidence="2">
    <location>
        <begin position="141"/>
        <end position="163"/>
    </location>
</feature>
<feature type="transmembrane region" description="Helical; Name=4" evidence="2">
    <location>
        <begin position="164"/>
        <end position="183"/>
    </location>
</feature>
<feature type="topological domain" description="Extracellular" evidence="2">
    <location>
        <begin position="184"/>
        <end position="191"/>
    </location>
</feature>
<feature type="transmembrane region" description="Helical; Name=5" evidence="2">
    <location>
        <begin position="192"/>
        <end position="211"/>
    </location>
</feature>
<feature type="topological domain" description="Cytoplasmic" evidence="2">
    <location>
        <begin position="212"/>
        <end position="240"/>
    </location>
</feature>
<feature type="transmembrane region" description="Helical; Name=6" evidence="2">
    <location>
        <begin position="241"/>
        <end position="266"/>
    </location>
</feature>
<feature type="topological domain" description="Extracellular" evidence="2">
    <location>
        <begin position="267"/>
        <end position="279"/>
    </location>
</feature>
<feature type="transmembrane region" description="Helical; Name=7" evidence="2">
    <location>
        <begin position="280"/>
        <end position="300"/>
    </location>
</feature>
<feature type="topological domain" description="Cytoplasmic" evidence="2">
    <location>
        <begin position="301"/>
        <end position="317"/>
    </location>
</feature>
<feature type="lipid moiety-binding region" description="S-palmitoyl cysteine" evidence="2">
    <location>
        <position position="315"/>
    </location>
</feature>
<feature type="glycosylation site" description="N-linked (GlcNAc...) asparagine" evidence="2">
    <location>
        <position position="29"/>
    </location>
</feature>
<keyword id="KW-1003">Cell membrane</keyword>
<keyword id="KW-0297">G-protein coupled receptor</keyword>
<keyword id="KW-0325">Glycoprotein</keyword>
<keyword id="KW-0449">Lipoprotein</keyword>
<keyword id="KW-0472">Membrane</keyword>
<keyword id="KW-0564">Palmitate</keyword>
<keyword id="KW-0675">Receptor</keyword>
<keyword id="KW-0807">Transducer</keyword>
<keyword id="KW-0812">Transmembrane</keyword>
<keyword id="KW-1133">Transmembrane helix</keyword>